<proteinExistence type="inferred from homology"/>
<keyword id="KW-0028">Amino-acid biosynthesis</keyword>
<keyword id="KW-0963">Cytoplasm</keyword>
<keyword id="KW-0413">Isomerase</keyword>
<keyword id="KW-0457">Lysine biosynthesis</keyword>
<evidence type="ECO:0000255" key="1">
    <source>
        <dbReference type="HAMAP-Rule" id="MF_00197"/>
    </source>
</evidence>
<organism>
    <name type="scientific">Bacillus cytotoxicus (strain DSM 22905 / CIP 110041 / 391-98 / NVH 391-98)</name>
    <dbReference type="NCBI Taxonomy" id="315749"/>
    <lineage>
        <taxon>Bacteria</taxon>
        <taxon>Bacillati</taxon>
        <taxon>Bacillota</taxon>
        <taxon>Bacilli</taxon>
        <taxon>Bacillales</taxon>
        <taxon>Bacillaceae</taxon>
        <taxon>Bacillus</taxon>
        <taxon>Bacillus cereus group</taxon>
    </lineage>
</organism>
<protein>
    <recommendedName>
        <fullName evidence="1">Diaminopimelate epimerase</fullName>
        <shortName evidence="1">DAP epimerase</shortName>
        <ecNumber evidence="1">5.1.1.7</ecNumber>
    </recommendedName>
    <alternativeName>
        <fullName evidence="1">PLP-independent amino acid racemase</fullName>
    </alternativeName>
</protein>
<name>DAPF_BACCN</name>
<gene>
    <name evidence="1" type="primary">dapF</name>
    <name type="ordered locus">Bcer98_3545</name>
</gene>
<accession>A7GUE1</accession>
<dbReference type="EC" id="5.1.1.7" evidence="1"/>
<dbReference type="EMBL" id="CP000764">
    <property type="protein sequence ID" value="ABS23749.1"/>
    <property type="molecule type" value="Genomic_DNA"/>
</dbReference>
<dbReference type="RefSeq" id="WP_012095999.1">
    <property type="nucleotide sequence ID" value="NC_009674.1"/>
</dbReference>
<dbReference type="SMR" id="A7GUE1"/>
<dbReference type="STRING" id="315749.Bcer98_3545"/>
<dbReference type="GeneID" id="33898800"/>
<dbReference type="KEGG" id="bcy:Bcer98_3545"/>
<dbReference type="eggNOG" id="COG0253">
    <property type="taxonomic scope" value="Bacteria"/>
</dbReference>
<dbReference type="HOGENOM" id="CLU_053306_3_0_9"/>
<dbReference type="OrthoDB" id="9805408at2"/>
<dbReference type="UniPathway" id="UPA00034">
    <property type="reaction ID" value="UER00025"/>
</dbReference>
<dbReference type="Proteomes" id="UP000002300">
    <property type="component" value="Chromosome"/>
</dbReference>
<dbReference type="GO" id="GO:0005829">
    <property type="term" value="C:cytosol"/>
    <property type="evidence" value="ECO:0007669"/>
    <property type="project" value="TreeGrafter"/>
</dbReference>
<dbReference type="GO" id="GO:0008837">
    <property type="term" value="F:diaminopimelate epimerase activity"/>
    <property type="evidence" value="ECO:0007669"/>
    <property type="project" value="UniProtKB-UniRule"/>
</dbReference>
<dbReference type="GO" id="GO:0009089">
    <property type="term" value="P:lysine biosynthetic process via diaminopimelate"/>
    <property type="evidence" value="ECO:0007669"/>
    <property type="project" value="UniProtKB-UniRule"/>
</dbReference>
<dbReference type="FunFam" id="3.10.310.10:FF:000004">
    <property type="entry name" value="Diaminopimelate epimerase"/>
    <property type="match status" value="1"/>
</dbReference>
<dbReference type="FunFam" id="3.10.310.10:FF:000006">
    <property type="entry name" value="Diaminopimelate epimerase"/>
    <property type="match status" value="1"/>
</dbReference>
<dbReference type="Gene3D" id="3.10.310.10">
    <property type="entry name" value="Diaminopimelate Epimerase, Chain A, domain 1"/>
    <property type="match status" value="2"/>
</dbReference>
<dbReference type="HAMAP" id="MF_00197">
    <property type="entry name" value="DAP_epimerase"/>
    <property type="match status" value="1"/>
</dbReference>
<dbReference type="InterPro" id="IPR018510">
    <property type="entry name" value="DAP_epimerase_AS"/>
</dbReference>
<dbReference type="InterPro" id="IPR001653">
    <property type="entry name" value="DAP_epimerase_DapF"/>
</dbReference>
<dbReference type="NCBIfam" id="TIGR00652">
    <property type="entry name" value="DapF"/>
    <property type="match status" value="1"/>
</dbReference>
<dbReference type="PANTHER" id="PTHR31689:SF0">
    <property type="entry name" value="DIAMINOPIMELATE EPIMERASE"/>
    <property type="match status" value="1"/>
</dbReference>
<dbReference type="PANTHER" id="PTHR31689">
    <property type="entry name" value="DIAMINOPIMELATE EPIMERASE, CHLOROPLASTIC"/>
    <property type="match status" value="1"/>
</dbReference>
<dbReference type="Pfam" id="PF01678">
    <property type="entry name" value="DAP_epimerase"/>
    <property type="match status" value="2"/>
</dbReference>
<dbReference type="SUPFAM" id="SSF54506">
    <property type="entry name" value="Diaminopimelate epimerase-like"/>
    <property type="match status" value="1"/>
</dbReference>
<dbReference type="PROSITE" id="PS01326">
    <property type="entry name" value="DAP_EPIMERASE"/>
    <property type="match status" value="1"/>
</dbReference>
<reference key="1">
    <citation type="journal article" date="2008" name="Chem. Biol. Interact.">
        <title>Extending the Bacillus cereus group genomics to putative food-borne pathogens of different toxicity.</title>
        <authorList>
            <person name="Lapidus A."/>
            <person name="Goltsman E."/>
            <person name="Auger S."/>
            <person name="Galleron N."/>
            <person name="Segurens B."/>
            <person name="Dossat C."/>
            <person name="Land M.L."/>
            <person name="Broussolle V."/>
            <person name="Brillard J."/>
            <person name="Guinebretiere M.-H."/>
            <person name="Sanchis V."/>
            <person name="Nguen-the C."/>
            <person name="Lereclus D."/>
            <person name="Richardson P."/>
            <person name="Wincker P."/>
            <person name="Weissenbach J."/>
            <person name="Ehrlich S.D."/>
            <person name="Sorokin A."/>
        </authorList>
    </citation>
    <scope>NUCLEOTIDE SEQUENCE [LARGE SCALE GENOMIC DNA]</scope>
    <source>
        <strain>DSM 22905 / CIP 110041 / 391-98 / NVH 391-98</strain>
    </source>
</reference>
<comment type="function">
    <text evidence="1">Catalyzes the stereoinversion of LL-2,6-diaminopimelate (L,L-DAP) to meso-diaminopimelate (meso-DAP), a precursor of L-lysine and an essential component of the bacterial peptidoglycan.</text>
</comment>
<comment type="catalytic activity">
    <reaction evidence="1">
        <text>(2S,6S)-2,6-diaminopimelate = meso-2,6-diaminopimelate</text>
        <dbReference type="Rhea" id="RHEA:15393"/>
        <dbReference type="ChEBI" id="CHEBI:57609"/>
        <dbReference type="ChEBI" id="CHEBI:57791"/>
        <dbReference type="EC" id="5.1.1.7"/>
    </reaction>
</comment>
<comment type="pathway">
    <text evidence="1">Amino-acid biosynthesis; L-lysine biosynthesis via DAP pathway; DL-2,6-diaminopimelate from LL-2,6-diaminopimelate: step 1/1.</text>
</comment>
<comment type="subunit">
    <text evidence="1">Homodimer.</text>
</comment>
<comment type="subcellular location">
    <subcellularLocation>
        <location evidence="1">Cytoplasm</location>
    </subcellularLocation>
</comment>
<comment type="similarity">
    <text evidence="1">Belongs to the diaminopimelate epimerase family.</text>
</comment>
<feature type="chain" id="PRO_1000077689" description="Diaminopimelate epimerase">
    <location>
        <begin position="1"/>
        <end position="288"/>
    </location>
</feature>
<feature type="active site" description="Proton donor" evidence="1">
    <location>
        <position position="76"/>
    </location>
</feature>
<feature type="active site" description="Proton acceptor" evidence="1">
    <location>
        <position position="226"/>
    </location>
</feature>
<feature type="binding site" evidence="1">
    <location>
        <position position="14"/>
    </location>
    <ligand>
        <name>substrate</name>
    </ligand>
</feature>
<feature type="binding site" evidence="1">
    <location>
        <position position="67"/>
    </location>
    <ligand>
        <name>substrate</name>
    </ligand>
</feature>
<feature type="binding site" evidence="1">
    <location>
        <begin position="77"/>
        <end position="78"/>
    </location>
    <ligand>
        <name>substrate</name>
    </ligand>
</feature>
<feature type="binding site" evidence="1">
    <location>
        <position position="166"/>
    </location>
    <ligand>
        <name>substrate</name>
    </ligand>
</feature>
<feature type="binding site" evidence="1">
    <location>
        <position position="199"/>
    </location>
    <ligand>
        <name>substrate</name>
    </ligand>
</feature>
<feature type="binding site" evidence="1">
    <location>
        <begin position="217"/>
        <end position="218"/>
    </location>
    <ligand>
        <name>substrate</name>
    </ligand>
</feature>
<feature type="binding site" evidence="1">
    <location>
        <begin position="227"/>
        <end position="228"/>
    </location>
    <ligand>
        <name>substrate</name>
    </ligand>
</feature>
<feature type="site" description="Could be important to modulate the pK values of the two catalytic cysteine residues" evidence="1">
    <location>
        <position position="168"/>
    </location>
</feature>
<feature type="site" description="Could be important to modulate the pK values of the two catalytic cysteine residues" evidence="1">
    <location>
        <position position="217"/>
    </location>
</feature>
<sequence length="288" mass="31777">MSQFSFTKMHGLGNSYIYVNMFEEHIPEEELALVAEKVSNRNTGIGADGMILICPSEVAPVKMRMFNNDGSEGKSCGNGLRCVAKYAYEHKLVEETIFTIETLAGIVTAEVTVENDIVTLVKIDMGAPRLTRAELPMLGEGETPFIREDFLFHNQRYAFTAVSMGNPHAVIFVDDVEKAPLTTLGPVLENHEMFPERVNVEFIEILNETEMNFRVWERGSGVTQACGTGACASVVAAILNGKMERGKEITVHLAGGDLMITWTEEGTVMMKGPAEVICHGVYEYKIEA</sequence>